<dbReference type="EC" id="2.7.11.1" evidence="5"/>
<dbReference type="EMBL" id="CP000611">
    <property type="protein sequence ID" value="ABQ73506.1"/>
    <property type="molecule type" value="Genomic_DNA"/>
</dbReference>
<dbReference type="RefSeq" id="WP_003899000.1">
    <property type="nucleotide sequence ID" value="NZ_CP016972.1"/>
</dbReference>
<dbReference type="SMR" id="A5U3A6"/>
<dbReference type="GeneID" id="45425719"/>
<dbReference type="KEGG" id="mra:MRA_1757"/>
<dbReference type="eggNOG" id="COG0515">
    <property type="taxonomic scope" value="Bacteria"/>
</dbReference>
<dbReference type="HOGENOM" id="CLU_000288_63_44_11"/>
<dbReference type="Proteomes" id="UP000001988">
    <property type="component" value="Chromosome"/>
</dbReference>
<dbReference type="GO" id="GO:0005886">
    <property type="term" value="C:plasma membrane"/>
    <property type="evidence" value="ECO:0007669"/>
    <property type="project" value="UniProtKB-SubCell"/>
</dbReference>
<dbReference type="GO" id="GO:0005524">
    <property type="term" value="F:ATP binding"/>
    <property type="evidence" value="ECO:0007669"/>
    <property type="project" value="UniProtKB-KW"/>
</dbReference>
<dbReference type="GO" id="GO:0004674">
    <property type="term" value="F:protein serine/threonine kinase activity"/>
    <property type="evidence" value="ECO:0007669"/>
    <property type="project" value="UniProtKB-KW"/>
</dbReference>
<dbReference type="GO" id="GO:0080090">
    <property type="term" value="P:regulation of primary metabolic process"/>
    <property type="evidence" value="ECO:0007669"/>
    <property type="project" value="UniProtKB-ARBA"/>
</dbReference>
<dbReference type="CDD" id="cd14014">
    <property type="entry name" value="STKc_PknB_like"/>
    <property type="match status" value="1"/>
</dbReference>
<dbReference type="FunFam" id="1.10.510.10:FF:000998">
    <property type="entry name" value="Anchored-membrane serine/threonine-protein kinase pknF"/>
    <property type="match status" value="1"/>
</dbReference>
<dbReference type="FunFam" id="3.30.200.20:FF:000035">
    <property type="entry name" value="Serine/threonine protein kinase Stk1"/>
    <property type="match status" value="1"/>
</dbReference>
<dbReference type="Gene3D" id="3.30.200.20">
    <property type="entry name" value="Phosphorylase Kinase, domain 1"/>
    <property type="match status" value="1"/>
</dbReference>
<dbReference type="Gene3D" id="1.10.510.10">
    <property type="entry name" value="Transferase(Phosphotransferase) domain 1"/>
    <property type="match status" value="1"/>
</dbReference>
<dbReference type="InterPro" id="IPR011009">
    <property type="entry name" value="Kinase-like_dom_sf"/>
</dbReference>
<dbReference type="InterPro" id="IPR000719">
    <property type="entry name" value="Prot_kinase_dom"/>
</dbReference>
<dbReference type="InterPro" id="IPR008271">
    <property type="entry name" value="Ser/Thr_kinase_AS"/>
</dbReference>
<dbReference type="PANTHER" id="PTHR43289">
    <property type="entry name" value="MITOGEN-ACTIVATED PROTEIN KINASE KINASE KINASE 20-RELATED"/>
    <property type="match status" value="1"/>
</dbReference>
<dbReference type="PANTHER" id="PTHR43289:SF6">
    <property type="entry name" value="SERINE_THREONINE-PROTEIN KINASE NEKL-3"/>
    <property type="match status" value="1"/>
</dbReference>
<dbReference type="Pfam" id="PF00069">
    <property type="entry name" value="Pkinase"/>
    <property type="match status" value="1"/>
</dbReference>
<dbReference type="SMART" id="SM00220">
    <property type="entry name" value="S_TKc"/>
    <property type="match status" value="1"/>
</dbReference>
<dbReference type="SUPFAM" id="SSF56112">
    <property type="entry name" value="Protein kinase-like (PK-like)"/>
    <property type="match status" value="1"/>
</dbReference>
<dbReference type="PROSITE" id="PS50011">
    <property type="entry name" value="PROTEIN_KINASE_DOM"/>
    <property type="match status" value="1"/>
</dbReference>
<dbReference type="PROSITE" id="PS00108">
    <property type="entry name" value="PROTEIN_KINASE_ST"/>
    <property type="match status" value="1"/>
</dbReference>
<feature type="chain" id="PRO_0000458847" description="Serine/threonine-protein kinase PknF">
    <location>
        <begin position="1"/>
        <end position="476"/>
    </location>
</feature>
<feature type="transmembrane region" description="Helical" evidence="2">
    <location>
        <begin position="306"/>
        <end position="326"/>
    </location>
</feature>
<feature type="domain" description="Protein kinase" evidence="3">
    <location>
        <begin position="12"/>
        <end position="279"/>
    </location>
</feature>
<feature type="region of interest" description="Disordered" evidence="4">
    <location>
        <begin position="332"/>
        <end position="376"/>
    </location>
</feature>
<feature type="compositionally biased region" description="Low complexity" evidence="4">
    <location>
        <begin position="338"/>
        <end position="376"/>
    </location>
</feature>
<feature type="active site" description="Proton acceptor" evidence="3">
    <location>
        <position position="137"/>
    </location>
</feature>
<feature type="binding site" evidence="3">
    <location>
        <begin position="18"/>
        <end position="26"/>
    </location>
    <ligand>
        <name>ATP</name>
        <dbReference type="ChEBI" id="CHEBI:30616"/>
    </ligand>
</feature>
<feature type="binding site" evidence="3">
    <location>
        <position position="41"/>
    </location>
    <ligand>
        <name>ATP</name>
        <dbReference type="ChEBI" id="CHEBI:30616"/>
    </ligand>
</feature>
<evidence type="ECO:0000250" key="1">
    <source>
        <dbReference type="UniProtKB" id="P9WI75"/>
    </source>
</evidence>
<evidence type="ECO:0000255" key="2"/>
<evidence type="ECO:0000255" key="3">
    <source>
        <dbReference type="PROSITE-ProRule" id="PRU00159"/>
    </source>
</evidence>
<evidence type="ECO:0000256" key="4">
    <source>
        <dbReference type="SAM" id="MobiDB-lite"/>
    </source>
</evidence>
<evidence type="ECO:0000269" key="5">
    <source>
    </source>
</evidence>
<evidence type="ECO:0000303" key="6">
    <source>
    </source>
</evidence>
<evidence type="ECO:0000305" key="7">
    <source>
    </source>
</evidence>
<evidence type="ECO:0000312" key="8">
    <source>
        <dbReference type="EMBL" id="ABQ73506.1"/>
    </source>
</evidence>
<accession>A5U3A6</accession>
<comment type="function">
    <text evidence="1">A serine/threonine-protein kinase, acts on HupB in vitro.</text>
</comment>
<comment type="catalytic activity">
    <reaction evidence="7">
        <text>L-seryl-[protein] + ATP = O-phospho-L-seryl-[protein] + ADP + H(+)</text>
        <dbReference type="Rhea" id="RHEA:17989"/>
        <dbReference type="Rhea" id="RHEA-COMP:9863"/>
        <dbReference type="Rhea" id="RHEA-COMP:11604"/>
        <dbReference type="ChEBI" id="CHEBI:15378"/>
        <dbReference type="ChEBI" id="CHEBI:29999"/>
        <dbReference type="ChEBI" id="CHEBI:30616"/>
        <dbReference type="ChEBI" id="CHEBI:83421"/>
        <dbReference type="ChEBI" id="CHEBI:456216"/>
        <dbReference type="EC" id="2.7.11.1"/>
    </reaction>
</comment>
<comment type="catalytic activity">
    <reaction evidence="5">
        <text>L-threonyl-[protein] + ATP = O-phospho-L-threonyl-[protein] + ADP + H(+)</text>
        <dbReference type="Rhea" id="RHEA:46608"/>
        <dbReference type="Rhea" id="RHEA-COMP:11060"/>
        <dbReference type="Rhea" id="RHEA-COMP:11605"/>
        <dbReference type="ChEBI" id="CHEBI:15378"/>
        <dbReference type="ChEBI" id="CHEBI:30013"/>
        <dbReference type="ChEBI" id="CHEBI:30616"/>
        <dbReference type="ChEBI" id="CHEBI:61977"/>
        <dbReference type="ChEBI" id="CHEBI:456216"/>
        <dbReference type="EC" id="2.7.11.1"/>
    </reaction>
</comment>
<comment type="subcellular location">
    <subcellularLocation>
        <location evidence="1">Cell membrane</location>
        <topology evidence="2">Single-pass membrane protein</topology>
    </subcellularLocation>
</comment>
<comment type="induction">
    <text evidence="5">Transcribed at a constant level during all growth phases.</text>
</comment>
<comment type="PTM">
    <text evidence="1 5">Autophosphorylated (PubMed:24816602). Dephosphorylated by PstP (By similarity).</text>
</comment>
<comment type="similarity">
    <text evidence="3">Belongs to the protein kinase superfamily. Ser/Thr protein kinase family.</text>
</comment>
<protein>
    <recommendedName>
        <fullName evidence="6">Serine/threonine-protein kinase PknF</fullName>
        <ecNumber evidence="5">2.7.11.1</ecNumber>
    </recommendedName>
</protein>
<keyword id="KW-0067">ATP-binding</keyword>
<keyword id="KW-1003">Cell membrane</keyword>
<keyword id="KW-0418">Kinase</keyword>
<keyword id="KW-0472">Membrane</keyword>
<keyword id="KW-0547">Nucleotide-binding</keyword>
<keyword id="KW-1185">Reference proteome</keyword>
<keyword id="KW-0723">Serine/threonine-protein kinase</keyword>
<keyword id="KW-0808">Transferase</keyword>
<keyword id="KW-0812">Transmembrane</keyword>
<keyword id="KW-1133">Transmembrane helix</keyword>
<reference evidence="8" key="1">
    <citation type="journal article" date="2008" name="PLoS ONE">
        <title>Genetic basis of virulence attenuation revealed by comparative genomic analysis of Mycobacterium tuberculosis strain H37Ra versus H37Rv.</title>
        <authorList>
            <person name="Zheng H."/>
            <person name="Lu L."/>
            <person name="Wang B."/>
            <person name="Pu S."/>
            <person name="Zhang X."/>
            <person name="Zhu G."/>
            <person name="Shi W."/>
            <person name="Zhang L."/>
            <person name="Wang H."/>
            <person name="Wang S."/>
            <person name="Zhao G."/>
            <person name="Zhang Y."/>
        </authorList>
    </citation>
    <scope>NUCLEOTIDE SEQUENCE [LARGE SCALE GENOMIC DNA]</scope>
    <source>
        <strain>ATCC 25177 / H37Ra</strain>
    </source>
</reference>
<reference key="2">
    <citation type="journal article" date="2014" name="J. Bacteriol.">
        <title>HupB, a nucleoid-associated protein of Mycobacterium tuberculosis, is modified by serine/threonine protein kinases in vivo.</title>
        <authorList>
            <person name="Gupta M."/>
            <person name="Sajid A."/>
            <person name="Sharma K."/>
            <person name="Ghosh S."/>
            <person name="Arora G."/>
            <person name="Singh R."/>
            <person name="Nagaraja V."/>
            <person name="Tandon V."/>
            <person name="Singh Y."/>
        </authorList>
    </citation>
    <scope>FUNCTION</scope>
    <scope>CATALYTIC ACTIVITY</scope>
    <scope>INDUCTION</scope>
    <scope>AUTOPHOSPHORYLATION</scope>
    <source>
        <strain>ATCC 25177 / H37Ra</strain>
    </source>
</reference>
<organism>
    <name type="scientific">Mycobacterium tuberculosis (strain ATCC 25177 / H37Ra)</name>
    <dbReference type="NCBI Taxonomy" id="419947"/>
    <lineage>
        <taxon>Bacteria</taxon>
        <taxon>Bacillati</taxon>
        <taxon>Actinomycetota</taxon>
        <taxon>Actinomycetes</taxon>
        <taxon>Mycobacteriales</taxon>
        <taxon>Mycobacteriaceae</taxon>
        <taxon>Mycobacterium</taxon>
        <taxon>Mycobacterium tuberculosis complex</taxon>
    </lineage>
</organism>
<proteinExistence type="evidence at protein level"/>
<gene>
    <name evidence="8" type="primary">pknF</name>
    <name evidence="8" type="ordered locus">MRA_1757</name>
</gene>
<name>PKNF_MYCTA</name>
<sequence length="476" mass="50668">MPLAEGSTFAGFTIVRQLGSGGMGEVYLARHPRLPRQDALKVLRADVSADGEYRARFNREADAAASLWHPHIVAVHDRGEFDGQLWIDMDFVDGTDTVSLLRDRYPNGMPGPEVTEIITAVAEALDYAHERRLLHRDVKPANILIANPDSPDRRIMLADFGIAGWVDDPSGLTATNMTVGTVSYAAPEQLMGNELDGRADQYALAATAFHLLTGSPPFQHANPAVVISQHLSASPPAIGDRVPELTPLDPVFAKALAKQPKDRYQRCVDFARALGHRLGGAGDPDDTRVSQPVAVAAPAKRSLLRTAVIVPAVLAMLLVMAVAVAVREFQRADDERAAQPARTRTTTSAGTTTSVAPASTTRPAPTTPTTTGAADTATASPTAAVVAIGALCFPLGSTGTTKTGATAYCSTLQGTNTTIWSLTEDTVASPTVTATADPTEAPLPIEQESPIRVCMQQTGQTRRECREEIRRSNGWP</sequence>